<comment type="function">
    <text evidence="1">Potential regulator of CDK5 activity.</text>
</comment>
<comment type="cofactor">
    <cofactor evidence="3">
        <name>[4Fe-4S] cluster</name>
        <dbReference type="ChEBI" id="CHEBI:49883"/>
    </cofactor>
    <text evidence="3">Binds 2 [4Fe-4S] clusters. One cluster is coordinated with 3 cysteines and an exchangeable S-adenosyl-L-methionine.</text>
</comment>
<comment type="similarity">
    <text evidence="5">Belongs to the methylthiotransferase family. MiaB subfamily.</text>
</comment>
<reference key="1">
    <citation type="journal article" date="1998" name="Science">
        <title>Genome sequence of the nematode C. elegans: a platform for investigating biology.</title>
        <authorList>
            <consortium name="The C. elegans sequencing consortium"/>
        </authorList>
    </citation>
    <scope>NUCLEOTIDE SEQUENCE [LARGE SCALE GENOMIC DNA]</scope>
    <source>
        <strain>Bristol N2</strain>
    </source>
</reference>
<feature type="chain" id="PRO_0000141767" description="CDK5RAP1-like protein">
    <location>
        <begin position="1"/>
        <end position="547"/>
    </location>
</feature>
<feature type="domain" description="MTTase N-terminal" evidence="3">
    <location>
        <begin position="79"/>
        <end position="194"/>
    </location>
</feature>
<feature type="domain" description="Radical SAM core" evidence="4">
    <location>
        <begin position="218"/>
        <end position="475"/>
    </location>
</feature>
<feature type="domain" description="TRAM" evidence="2">
    <location>
        <begin position="478"/>
        <end position="543"/>
    </location>
</feature>
<feature type="binding site" evidence="3">
    <location>
        <position position="88"/>
    </location>
    <ligand>
        <name>[4Fe-4S] cluster</name>
        <dbReference type="ChEBI" id="CHEBI:49883"/>
        <label>1</label>
    </ligand>
</feature>
<feature type="binding site" evidence="3">
    <location>
        <position position="124"/>
    </location>
    <ligand>
        <name>[4Fe-4S] cluster</name>
        <dbReference type="ChEBI" id="CHEBI:49883"/>
        <label>1</label>
    </ligand>
</feature>
<feature type="binding site" evidence="3">
    <location>
        <position position="157"/>
    </location>
    <ligand>
        <name>[4Fe-4S] cluster</name>
        <dbReference type="ChEBI" id="CHEBI:49883"/>
        <label>1</label>
    </ligand>
</feature>
<feature type="binding site" evidence="3">
    <location>
        <position position="232"/>
    </location>
    <ligand>
        <name>[4Fe-4S] cluster</name>
        <dbReference type="ChEBI" id="CHEBI:49883"/>
        <label>2</label>
        <note>4Fe-4S-S-AdoMet</note>
    </ligand>
</feature>
<feature type="binding site" evidence="3">
    <location>
        <position position="236"/>
    </location>
    <ligand>
        <name>[4Fe-4S] cluster</name>
        <dbReference type="ChEBI" id="CHEBI:49883"/>
        <label>2</label>
        <note>4Fe-4S-S-AdoMet</note>
    </ligand>
</feature>
<feature type="binding site" evidence="3">
    <location>
        <position position="239"/>
    </location>
    <ligand>
        <name>[4Fe-4S] cluster</name>
        <dbReference type="ChEBI" id="CHEBI:49883"/>
        <label>2</label>
        <note>4Fe-4S-S-AdoMet</note>
    </ligand>
</feature>
<name>CK5P1_CAEEL</name>
<dbReference type="EMBL" id="FO081045">
    <property type="protein sequence ID" value="CCD68781.1"/>
    <property type="molecule type" value="Genomic_DNA"/>
</dbReference>
<dbReference type="PIR" id="T16145">
    <property type="entry name" value="T16145"/>
</dbReference>
<dbReference type="RefSeq" id="NP_498290.1">
    <property type="nucleotide sequence ID" value="NM_065889.8"/>
</dbReference>
<dbReference type="SMR" id="Q09316"/>
<dbReference type="BioGRID" id="41062">
    <property type="interactions" value="2"/>
</dbReference>
<dbReference type="FunCoup" id="Q09316">
    <property type="interactions" value="2316"/>
</dbReference>
<dbReference type="STRING" id="6239.F25B5.5.1"/>
<dbReference type="PaxDb" id="6239-F25B5.5"/>
<dbReference type="PeptideAtlas" id="Q09316"/>
<dbReference type="EnsemblMetazoa" id="F25B5.5.1">
    <property type="protein sequence ID" value="F25B5.5.1"/>
    <property type="gene ID" value="WBGene00017776"/>
</dbReference>
<dbReference type="GeneID" id="175841"/>
<dbReference type="KEGG" id="cel:CELE_F25B5.5"/>
<dbReference type="UCSC" id="F25B5.5">
    <property type="organism name" value="c. elegans"/>
</dbReference>
<dbReference type="AGR" id="WB:WBGene00017776"/>
<dbReference type="CTD" id="175841"/>
<dbReference type="WormBase" id="F25B5.5">
    <property type="protein sequence ID" value="CE01922"/>
    <property type="gene ID" value="WBGene00017776"/>
</dbReference>
<dbReference type="eggNOG" id="KOG2492">
    <property type="taxonomic scope" value="Eukaryota"/>
</dbReference>
<dbReference type="GeneTree" id="ENSGT00940000165667"/>
<dbReference type="HOGENOM" id="CLU_018697_2_1_1"/>
<dbReference type="InParanoid" id="Q09316"/>
<dbReference type="OMA" id="CEHFHIP"/>
<dbReference type="OrthoDB" id="190098at2759"/>
<dbReference type="PhylomeDB" id="Q09316"/>
<dbReference type="PRO" id="PR:Q09316"/>
<dbReference type="Proteomes" id="UP000001940">
    <property type="component" value="Chromosome III"/>
</dbReference>
<dbReference type="Bgee" id="WBGene00017776">
    <property type="expression patterns" value="Expressed in germ line (C elegans) and 4 other cell types or tissues"/>
</dbReference>
<dbReference type="GO" id="GO:0005829">
    <property type="term" value="C:cytosol"/>
    <property type="evidence" value="ECO:0000318"/>
    <property type="project" value="GO_Central"/>
</dbReference>
<dbReference type="GO" id="GO:0005739">
    <property type="term" value="C:mitochondrion"/>
    <property type="evidence" value="ECO:0000318"/>
    <property type="project" value="GO_Central"/>
</dbReference>
<dbReference type="GO" id="GO:0051539">
    <property type="term" value="F:4 iron, 4 sulfur cluster binding"/>
    <property type="evidence" value="ECO:0007669"/>
    <property type="project" value="UniProtKB-KW"/>
</dbReference>
<dbReference type="GO" id="GO:0046872">
    <property type="term" value="F:metal ion binding"/>
    <property type="evidence" value="ECO:0007669"/>
    <property type="project" value="UniProtKB-KW"/>
</dbReference>
<dbReference type="GO" id="GO:0035597">
    <property type="term" value="F:N6-isopentenyladenosine methylthiotransferase activity"/>
    <property type="evidence" value="ECO:0000318"/>
    <property type="project" value="GO_Central"/>
</dbReference>
<dbReference type="GO" id="GO:0070900">
    <property type="term" value="P:mitochondrial tRNA modification"/>
    <property type="evidence" value="ECO:0000318"/>
    <property type="project" value="GO_Central"/>
</dbReference>
<dbReference type="GO" id="GO:0000079">
    <property type="term" value="P:regulation of cyclin-dependent protein serine/threonine kinase activity"/>
    <property type="evidence" value="ECO:0000250"/>
    <property type="project" value="UniProtKB"/>
</dbReference>
<dbReference type="FunFam" id="3.40.50.12160:FF:000003">
    <property type="entry name" value="CDK5 regulatory subunit-associated protein 1"/>
    <property type="match status" value="1"/>
</dbReference>
<dbReference type="FunFam" id="3.80.30.20:FF:000003">
    <property type="entry name" value="CDK5 regulatory subunit-associated protein 1"/>
    <property type="match status" value="1"/>
</dbReference>
<dbReference type="Gene3D" id="3.40.50.12160">
    <property type="entry name" value="Methylthiotransferase, N-terminal domain"/>
    <property type="match status" value="1"/>
</dbReference>
<dbReference type="Gene3D" id="3.80.30.20">
    <property type="entry name" value="tm_1862 like domain"/>
    <property type="match status" value="1"/>
</dbReference>
<dbReference type="InterPro" id="IPR006638">
    <property type="entry name" value="Elp3/MiaA/NifB-like_rSAM"/>
</dbReference>
<dbReference type="InterPro" id="IPR005839">
    <property type="entry name" value="Methylthiotransferase"/>
</dbReference>
<dbReference type="InterPro" id="IPR020612">
    <property type="entry name" value="Methylthiotransferase_CS"/>
</dbReference>
<dbReference type="InterPro" id="IPR013848">
    <property type="entry name" value="Methylthiotransferase_N"/>
</dbReference>
<dbReference type="InterPro" id="IPR038135">
    <property type="entry name" value="Methylthiotransferase_N_sf"/>
</dbReference>
<dbReference type="InterPro" id="IPR006463">
    <property type="entry name" value="MiaB_methiolase"/>
</dbReference>
<dbReference type="InterPro" id="IPR007197">
    <property type="entry name" value="rSAM"/>
</dbReference>
<dbReference type="InterPro" id="IPR023404">
    <property type="entry name" value="rSAM_horseshoe"/>
</dbReference>
<dbReference type="InterPro" id="IPR002792">
    <property type="entry name" value="TRAM_dom"/>
</dbReference>
<dbReference type="NCBIfam" id="TIGR00089">
    <property type="entry name" value="MiaB/RimO family radical SAM methylthiotransferase"/>
    <property type="match status" value="1"/>
</dbReference>
<dbReference type="PANTHER" id="PTHR43020">
    <property type="entry name" value="CDK5 REGULATORY SUBUNIT-ASSOCIATED PROTEIN 1"/>
    <property type="match status" value="1"/>
</dbReference>
<dbReference type="PANTHER" id="PTHR43020:SF2">
    <property type="entry name" value="MITOCHONDRIAL TRNA METHYLTHIOTRANSFERASE CDK5RAP1"/>
    <property type="match status" value="1"/>
</dbReference>
<dbReference type="Pfam" id="PF04055">
    <property type="entry name" value="Radical_SAM"/>
    <property type="match status" value="1"/>
</dbReference>
<dbReference type="Pfam" id="PF01938">
    <property type="entry name" value="TRAM"/>
    <property type="match status" value="1"/>
</dbReference>
<dbReference type="Pfam" id="PF00919">
    <property type="entry name" value="UPF0004"/>
    <property type="match status" value="1"/>
</dbReference>
<dbReference type="SFLD" id="SFLDF00273">
    <property type="entry name" value="(dimethylallyl)adenosine_tRNA"/>
    <property type="match status" value="1"/>
</dbReference>
<dbReference type="SFLD" id="SFLDG01082">
    <property type="entry name" value="B12-binding_domain_containing"/>
    <property type="match status" value="1"/>
</dbReference>
<dbReference type="SFLD" id="SFLDF00413">
    <property type="entry name" value="CDK5RAP1"/>
    <property type="match status" value="1"/>
</dbReference>
<dbReference type="SFLD" id="SFLDG01061">
    <property type="entry name" value="methylthiotransferase"/>
    <property type="match status" value="2"/>
</dbReference>
<dbReference type="SMART" id="SM00729">
    <property type="entry name" value="Elp3"/>
    <property type="match status" value="1"/>
</dbReference>
<dbReference type="SUPFAM" id="SSF102114">
    <property type="entry name" value="Radical SAM enzymes"/>
    <property type="match status" value="1"/>
</dbReference>
<dbReference type="PROSITE" id="PS51449">
    <property type="entry name" value="MTTASE_N"/>
    <property type="match status" value="1"/>
</dbReference>
<dbReference type="PROSITE" id="PS01278">
    <property type="entry name" value="MTTASE_RADICAL"/>
    <property type="match status" value="1"/>
</dbReference>
<dbReference type="PROSITE" id="PS51918">
    <property type="entry name" value="RADICAL_SAM"/>
    <property type="match status" value="1"/>
</dbReference>
<dbReference type="PROSITE" id="PS50926">
    <property type="entry name" value="TRAM"/>
    <property type="match status" value="1"/>
</dbReference>
<evidence type="ECO:0000250" key="1"/>
<evidence type="ECO:0000255" key="2">
    <source>
        <dbReference type="PROSITE-ProRule" id="PRU00208"/>
    </source>
</evidence>
<evidence type="ECO:0000255" key="3">
    <source>
        <dbReference type="PROSITE-ProRule" id="PRU00780"/>
    </source>
</evidence>
<evidence type="ECO:0000255" key="4">
    <source>
        <dbReference type="PROSITE-ProRule" id="PRU01266"/>
    </source>
</evidence>
<evidence type="ECO:0000305" key="5"/>
<keyword id="KW-0004">4Fe-4S</keyword>
<keyword id="KW-0408">Iron</keyword>
<keyword id="KW-0411">Iron-sulfur</keyword>
<keyword id="KW-0479">Metal-binding</keyword>
<keyword id="KW-1185">Reference proteome</keyword>
<keyword id="KW-0949">S-adenosyl-L-methionine</keyword>
<protein>
    <recommendedName>
        <fullName>CDK5RAP1-like protein</fullName>
    </recommendedName>
</protein>
<sequence>MLRQWWLRSVGSCSTVYRAHSGCSTSAAVKPKRAIPTDGLQLSDFIKESTKKQRQKAIIPSIEDTKEYLNPEDLQGNGRTVCYVTYGCQMNVSDMEIVRSIMTKYGFVESDKKENADIVLLMTCSIRDGAEKKVWNQLKLIRSNSVNKGQIVGVLGCMAERVRHDLLEKRNLVNIVAGPDSYRDLPRLVAVAAGGSNGINVQLSLDETYADVQPIRVDSASKTAFISIMRGCDNMCTYCVVPFTRGRERSRPIESIVEEVQRLRDQGYKQVTLLGQNVNSYRDMTSMDFSMAPSTSQEDRVPGFKTVYKPKSGGLTFTTLLEKVADAAPDIRFRFTSPHPKDFPMQLIELIASRPNLCKQLHLPAQSGDDETLERMERGYTRDLYLRLVDDIRHVLPSVSLTSDFIAGFCGETEQAHQNTLSLIRAVRYSFCFVFPYSMRGKTRAHHRLTDDVPEDVKARRHLDLTTVFREEALKLNQALIGSEQTVLLEGKSKRDASFSHGRIDGGVKAVFDNSKLCLEPGQYAKILITDANSQTLKAQLIGQSSI</sequence>
<accession>Q09316</accession>
<gene>
    <name type="ORF">F25B5.5</name>
</gene>
<organism>
    <name type="scientific">Caenorhabditis elegans</name>
    <dbReference type="NCBI Taxonomy" id="6239"/>
    <lineage>
        <taxon>Eukaryota</taxon>
        <taxon>Metazoa</taxon>
        <taxon>Ecdysozoa</taxon>
        <taxon>Nematoda</taxon>
        <taxon>Chromadorea</taxon>
        <taxon>Rhabditida</taxon>
        <taxon>Rhabditina</taxon>
        <taxon>Rhabditomorpha</taxon>
        <taxon>Rhabditoidea</taxon>
        <taxon>Rhabditidae</taxon>
        <taxon>Peloderinae</taxon>
        <taxon>Caenorhabditis</taxon>
    </lineage>
</organism>
<proteinExistence type="inferred from homology"/>